<keyword id="KW-0175">Coiled coil</keyword>
<keyword id="KW-0597">Phosphoprotein</keyword>
<keyword id="KW-1185">Reference proteome</keyword>
<proteinExistence type="evidence at protein level"/>
<accession>P58660</accession>
<feature type="chain" id="PRO_0000144085" description="Caspase recruitment domain-containing protein 10">
    <location>
        <begin position="1"/>
        <end position="1021"/>
    </location>
</feature>
<feature type="domain" description="CARD" evidence="3">
    <location>
        <begin position="23"/>
        <end position="115"/>
    </location>
</feature>
<feature type="region of interest" description="Disordered" evidence="4">
    <location>
        <begin position="1"/>
        <end position="24"/>
    </location>
</feature>
<feature type="region of interest" description="Disordered" evidence="4">
    <location>
        <begin position="475"/>
        <end position="544"/>
    </location>
</feature>
<feature type="region of interest" description="Disordered" evidence="4">
    <location>
        <begin position="597"/>
        <end position="616"/>
    </location>
</feature>
<feature type="region of interest" description="Disordered" evidence="4">
    <location>
        <begin position="790"/>
        <end position="809"/>
    </location>
</feature>
<feature type="coiled-coil region" evidence="2">
    <location>
        <begin position="138"/>
        <end position="450"/>
    </location>
</feature>
<feature type="compositionally biased region" description="Basic and acidic residues" evidence="4">
    <location>
        <begin position="495"/>
        <end position="508"/>
    </location>
</feature>
<feature type="compositionally biased region" description="Basic and acidic residues" evidence="4">
    <location>
        <begin position="525"/>
        <end position="535"/>
    </location>
</feature>
<feature type="modified residue" description="Phosphoserine" evidence="7">
    <location>
        <position position="18"/>
    </location>
</feature>
<sequence>MQGRADAGEADEEAGAGSGSEAEEDALWERIEGVRHRLTRALNPAKLTPYLRQCRVLDEQDEEEVLSTYRFPCRANRTGRLIDILRCRGKRGFEAFLEALEFYYPEHFTLLTGQEPAQRCSMILDEEGPEGLTQFLMTEVRRLREARKSQLHREQQLQARGRALEEERAGLEQRLREQQQAQERCQRLREDWEAGSLELLRLKDENYMIAMRLAQLSEEKNSAVLRSRDLQLAVDQLKLKVSRLEEECALLRRARGPPPGAEEKEREPDGADLLSELRAENQRLTASLQELQEGLQQEMSRPGAAGSERILLDILEHDWREAQDSRQELCQKLHAVQGELQWAEELRDKYLQEMEDLRLKHRTLLKDCDLYKHRMATVLAQLEEIEKERDQAIQSRDRIQLQYSQSLIEKDQYRKQVRGLEAERDELLTTVTSLEGTKAMLEAQLQRTQGGSCLKACASSHSLCSNLSSTWSLSEFPSPLGGPEATGEAGGSEPHTSEEATDSEKEINRLSILPFPPSAGSILRRQREEDPEPPKRSFSSMSDITGSVTLKPWSPGLSSSSSSDSVWPLGKPEGLLARGCGLDFLNRSLAIRVSGWSPPAGLDPQDKSPDSMPGLGDRWSGAVVRRVLSGPGSARTEQKEPRAEGTGLEGAGLEAEAQQRTLPWNQSSTLPFLLDSKACHSFHEALDAWAKGPGAEPFYIRANFSLPERSDPHALCVKAQEILRLVDPAHKRRQEWFCTRVDTLTLRDLDRGTVPNYQRAQQLLEVQEKYLISSRHRSPRSNLKKRALGLVRPKPAGGTAGDSAEQLPAEPCSELERSLKPYSLVRPLLVSALRPVVLLPECLAPRLIRNLLDLPSSRLDFQVCPAESLSGEEQCTSSAPGAPKAWPATAGLGSRIRAIQESVGKKHCLLELGARGVRELVHSEVYPIVIHVEVTEKNVREIRGLLGRPGWRDSELLRQCRGSEQWLWGLPCSWVQVPAHAWGHAEELAKVVRGRILQEQARLVWVERGSSRGGSGSSSEA</sequence>
<organism>
    <name type="scientific">Mus musculus</name>
    <name type="common">Mouse</name>
    <dbReference type="NCBI Taxonomy" id="10090"/>
    <lineage>
        <taxon>Eukaryota</taxon>
        <taxon>Metazoa</taxon>
        <taxon>Chordata</taxon>
        <taxon>Craniata</taxon>
        <taxon>Vertebrata</taxon>
        <taxon>Euteleostomi</taxon>
        <taxon>Mammalia</taxon>
        <taxon>Eutheria</taxon>
        <taxon>Euarchontoglires</taxon>
        <taxon>Glires</taxon>
        <taxon>Rodentia</taxon>
        <taxon>Myomorpha</taxon>
        <taxon>Muroidea</taxon>
        <taxon>Muridae</taxon>
        <taxon>Murinae</taxon>
        <taxon>Mus</taxon>
        <taxon>Mus</taxon>
    </lineage>
</organism>
<comment type="function">
    <text evidence="5">Scaffold protein that plays an important role in mediating the activation of NF-kappa-B via BCL10 or EGFR.</text>
</comment>
<comment type="subunit">
    <text evidence="1 5">CARD10 and BCL10 bind to each other by CARD-CARD interaction. They both participate in a complex with MALT1, where MALT1 binds to BCL10 (PubMed:28717989). Interacts with TMEM43; this interaction is essential for EGFR-mediated NF-kappa-B activation (By similarity).</text>
</comment>
<comment type="interaction">
    <interactant intactId="EBI-8344379">
        <id>P58660</id>
    </interactant>
    <interactant intactId="EBI-641778">
        <id>Q8BWG8</id>
        <label>Arrb1</label>
    </interactant>
    <organismsDiffer>false</organismsDiffer>
    <experiments>4</experiments>
</comment>
<comment type="interaction">
    <interactant intactId="EBI-8344379">
        <id>P58660</id>
    </interactant>
    <interactant intactId="EBI-994161">
        <id>Q91YI4</id>
        <label>Arrb2</label>
    </interactant>
    <organismsDiffer>false</organismsDiffer>
    <experiments>7</experiments>
</comment>
<comment type="tissue specificity">
    <text>Highly expressed in kidney, heart followed by brain, lung, liver, skeletal muscle and testis.</text>
</comment>
<comment type="disruption phenotype">
    <text evidence="5">Deletion mice show impaired tissue repairing. In addition, more infiltration of inflammatory cells was found in deletion mice compared with control mice.</text>
</comment>
<comment type="caution">
    <text evidence="6">Supposed to contain a SH3, a PDZ and a guanylate kinase-like domain. But none of these 3 domains are detected by PROSITE, Pfam or SMART.</text>
</comment>
<reference key="1">
    <citation type="journal article" date="2001" name="J. Biol. Chem.">
        <title>Bimp1, a MAGUK family member linking protein kinase C activation to Bcl10-mediated NF-kappa B induction.</title>
        <authorList>
            <person name="McAllister-Lucas L.M."/>
            <person name="Inohara N."/>
            <person name="Lucas P.C."/>
            <person name="Ruland J."/>
            <person name="Benito A."/>
            <person name="Li Q."/>
            <person name="Chen S."/>
            <person name="Chen F.F."/>
            <person name="Yamaoka S."/>
            <person name="Verma I.M."/>
            <person name="Mak T.W."/>
            <person name="Nunez G."/>
        </authorList>
    </citation>
    <scope>NUCLEOTIDE SEQUENCE [MRNA]</scope>
</reference>
<reference key="2">
    <citation type="journal article" date="2004" name="Genome Res.">
        <title>The status, quality, and expansion of the NIH full-length cDNA project: the Mammalian Gene Collection (MGC).</title>
        <authorList>
            <consortium name="The MGC Project Team"/>
        </authorList>
    </citation>
    <scope>NUCLEOTIDE SEQUENCE [LARGE SCALE MRNA]</scope>
    <source>
        <strain>C57BL/6J</strain>
        <tissue>Brain</tissue>
    </source>
</reference>
<reference key="3">
    <citation type="journal article" date="2010" name="Cell">
        <title>A tissue-specific atlas of mouse protein phosphorylation and expression.</title>
        <authorList>
            <person name="Huttlin E.L."/>
            <person name="Jedrychowski M.P."/>
            <person name="Elias J.E."/>
            <person name="Goswami T."/>
            <person name="Rad R."/>
            <person name="Beausoleil S.A."/>
            <person name="Villen J."/>
            <person name="Haas W."/>
            <person name="Sowa M.E."/>
            <person name="Gygi S.P."/>
        </authorList>
    </citation>
    <scope>PHOSPHORYLATION [LARGE SCALE ANALYSIS] AT SER-18</scope>
    <scope>IDENTIFICATION BY MASS SPECTROMETRY [LARGE SCALE ANALYSIS]</scope>
    <source>
        <tissue>Kidney</tissue>
    </source>
</reference>
<reference key="4">
    <citation type="journal article" date="2017" name="Protein Cell">
        <title>The CARMA3-BCL10-MALT1 (CBM) complex contributes to DNA damage-induced NF-kappaB activation and cell survival.</title>
        <authorList>
            <person name="Zhang S."/>
            <person name="Pan D."/>
            <person name="Jia X.M."/>
            <person name="Lin X."/>
            <person name="Zhao X."/>
        </authorList>
    </citation>
    <scope>FUNCTION</scope>
    <scope>INTERACTION WITH BCL10 AND MALT1</scope>
    <scope>DISRUPTION PHENOTYPE</scope>
</reference>
<name>CAR10_MOUSE</name>
<dbReference type="EMBL" id="AF363456">
    <property type="protein sequence ID" value="AAK60136.1"/>
    <property type="molecule type" value="mRNA"/>
</dbReference>
<dbReference type="EMBL" id="BC060203">
    <property type="protein sequence ID" value="AAH60203.1"/>
    <property type="molecule type" value="mRNA"/>
</dbReference>
<dbReference type="CCDS" id="CCDS27623.2"/>
<dbReference type="RefSeq" id="NP_570929.3">
    <property type="nucleotide sequence ID" value="NM_130859.3"/>
</dbReference>
<dbReference type="SMR" id="P58660"/>
<dbReference type="BioGRID" id="222934">
    <property type="interactions" value="2"/>
</dbReference>
<dbReference type="DIP" id="DIP-60780N"/>
<dbReference type="FunCoup" id="P58660">
    <property type="interactions" value="140"/>
</dbReference>
<dbReference type="IntAct" id="P58660">
    <property type="interactions" value="3"/>
</dbReference>
<dbReference type="STRING" id="10090.ENSMUSP00000129513"/>
<dbReference type="iPTMnet" id="P58660"/>
<dbReference type="PhosphoSitePlus" id="P58660"/>
<dbReference type="PaxDb" id="10090-ENSMUSP00000129513"/>
<dbReference type="ProteomicsDB" id="265332"/>
<dbReference type="Antibodypedia" id="25967">
    <property type="antibodies" value="232 antibodies from 29 providers"/>
</dbReference>
<dbReference type="Ensembl" id="ENSMUST00000170584.2">
    <property type="protein sequence ID" value="ENSMUSP00000131003.2"/>
    <property type="gene ID" value="ENSMUSG00000033170.15"/>
</dbReference>
<dbReference type="GeneID" id="105844"/>
<dbReference type="KEGG" id="mmu:105844"/>
<dbReference type="UCSC" id="uc007wrj.1">
    <property type="organism name" value="mouse"/>
</dbReference>
<dbReference type="AGR" id="MGI:2146012"/>
<dbReference type="CTD" id="29775"/>
<dbReference type="MGI" id="MGI:2146012">
    <property type="gene designation" value="Card10"/>
</dbReference>
<dbReference type="VEuPathDB" id="HostDB:ENSMUSG00000033170"/>
<dbReference type="eggNOG" id="KOG0708">
    <property type="taxonomic scope" value="Eukaryota"/>
</dbReference>
<dbReference type="GeneTree" id="ENSGT00940000157763"/>
<dbReference type="HOGENOM" id="CLU_009760_1_0_1"/>
<dbReference type="InParanoid" id="P58660"/>
<dbReference type="OMA" id="WWTEPST"/>
<dbReference type="OrthoDB" id="8868836at2759"/>
<dbReference type="PhylomeDB" id="P58660"/>
<dbReference type="BioGRID-ORCS" id="105844">
    <property type="hits" value="6 hits in 78 CRISPR screens"/>
</dbReference>
<dbReference type="ChiTaRS" id="Card10">
    <property type="organism name" value="mouse"/>
</dbReference>
<dbReference type="PRO" id="PR:P58660"/>
<dbReference type="Proteomes" id="UP000000589">
    <property type="component" value="Chromosome 15"/>
</dbReference>
<dbReference type="RNAct" id="P58660">
    <property type="molecule type" value="protein"/>
</dbReference>
<dbReference type="Bgee" id="ENSMUSG00000033170">
    <property type="expression patterns" value="Expressed in dorsomedial nucleus of hypothalamus and 227 other cell types or tissues"/>
</dbReference>
<dbReference type="ExpressionAtlas" id="P58660">
    <property type="expression patterns" value="baseline and differential"/>
</dbReference>
<dbReference type="GO" id="GO:0007250">
    <property type="term" value="P:activation of NF-kappaB-inducing kinase activity"/>
    <property type="evidence" value="ECO:0000250"/>
    <property type="project" value="UniProtKB"/>
</dbReference>
<dbReference type="GO" id="GO:0042981">
    <property type="term" value="P:regulation of apoptotic process"/>
    <property type="evidence" value="ECO:0007669"/>
    <property type="project" value="InterPro"/>
</dbReference>
<dbReference type="CDD" id="cd08807">
    <property type="entry name" value="CARD_CARD10_CARMA3"/>
    <property type="match status" value="1"/>
</dbReference>
<dbReference type="FunFam" id="2.30.30.40:FF:000143">
    <property type="entry name" value="Caspase recruitment domain family member 10"/>
    <property type="match status" value="1"/>
</dbReference>
<dbReference type="FunFam" id="3.40.50.300:FF:000867">
    <property type="entry name" value="Caspase recruitment domain family member 10"/>
    <property type="match status" value="1"/>
</dbReference>
<dbReference type="FunFam" id="1.10.533.10:FF:000003">
    <property type="entry name" value="Caspase recruitment domain family, member 11"/>
    <property type="match status" value="1"/>
</dbReference>
<dbReference type="Gene3D" id="1.10.533.10">
    <property type="entry name" value="Death Domain, Fas"/>
    <property type="match status" value="1"/>
</dbReference>
<dbReference type="Gene3D" id="3.40.50.300">
    <property type="entry name" value="P-loop containing nucleotide triphosphate hydrolases"/>
    <property type="match status" value="1"/>
</dbReference>
<dbReference type="Gene3D" id="2.30.30.40">
    <property type="entry name" value="SH3 Domains"/>
    <property type="match status" value="1"/>
</dbReference>
<dbReference type="InterPro" id="IPR001315">
    <property type="entry name" value="CARD"/>
</dbReference>
<dbReference type="InterPro" id="IPR042140">
    <property type="entry name" value="CARD_CARD10"/>
</dbReference>
<dbReference type="InterPro" id="IPR011029">
    <property type="entry name" value="DEATH-like_dom_sf"/>
</dbReference>
<dbReference type="InterPro" id="IPR027417">
    <property type="entry name" value="P-loop_NTPase"/>
</dbReference>
<dbReference type="PANTHER" id="PTHR14559">
    <property type="entry name" value="CASPASE RECRUITMENT DOMAIN FAMILY"/>
    <property type="match status" value="1"/>
</dbReference>
<dbReference type="PANTHER" id="PTHR14559:SF12">
    <property type="entry name" value="CASPASE RECRUITMENT DOMAIN-CONTAINING PROTEIN 10"/>
    <property type="match status" value="1"/>
</dbReference>
<dbReference type="Pfam" id="PF00619">
    <property type="entry name" value="CARD"/>
    <property type="match status" value="1"/>
</dbReference>
<dbReference type="SUPFAM" id="SSF47986">
    <property type="entry name" value="DEATH domain"/>
    <property type="match status" value="1"/>
</dbReference>
<dbReference type="PROSITE" id="PS50209">
    <property type="entry name" value="CARD"/>
    <property type="match status" value="1"/>
</dbReference>
<gene>
    <name type="primary">Card10</name>
    <name type="synonym">Bimp1</name>
</gene>
<protein>
    <recommendedName>
        <fullName>Caspase recruitment domain-containing protein 10</fullName>
    </recommendedName>
    <alternativeName>
        <fullName>Bcl10-interacting MAGUK protein 1</fullName>
        <shortName>Bimp1</shortName>
    </alternativeName>
</protein>
<evidence type="ECO:0000250" key="1">
    <source>
        <dbReference type="UniProtKB" id="Q9BWT7"/>
    </source>
</evidence>
<evidence type="ECO:0000255" key="2"/>
<evidence type="ECO:0000255" key="3">
    <source>
        <dbReference type="PROSITE-ProRule" id="PRU00046"/>
    </source>
</evidence>
<evidence type="ECO:0000256" key="4">
    <source>
        <dbReference type="SAM" id="MobiDB-lite"/>
    </source>
</evidence>
<evidence type="ECO:0000269" key="5">
    <source>
    </source>
</evidence>
<evidence type="ECO:0000305" key="6"/>
<evidence type="ECO:0007744" key="7">
    <source>
    </source>
</evidence>